<sequence length="160" mass="18721">MQPASAKWYDRRDYVFIEFCVEDSKDVNVNFEKSKLTFSCLGGSDNFKHLNEIDLFHCIDPNDSKHKRTDRSILCCLRKGESGQSWPRLTKERAKLNWLSVDFNNWKDWEDDSDEDMSNFDRFSEMMDHMGGDEDVDLPEVDGADDDSQDSDDEKMPDLE</sequence>
<name>TEBP_MOUSE</name>
<comment type="function">
    <text evidence="1">Cytosolic prostaglandin synthase that catalyzes the oxidoreduction of prostaglandin endoperoxide H2 (PGH2) to prostaglandin E2 (PGE2). Molecular chaperone that localizes to genomic response elements in a hormone-dependent manner and disrupts receptor-mediated transcriptional activation, by promoting disassembly of transcriptional regulatory complexes. Facilitates HIF alpha proteins hydroxylation via interaction with EGLN1/PHD2, leading to recruit EGLN1/PHD2 to the HSP90 pathway.</text>
</comment>
<comment type="catalytic activity">
    <reaction evidence="1">
        <text>prostaglandin H2 = prostaglandin E2</text>
        <dbReference type="Rhea" id="RHEA:12893"/>
        <dbReference type="ChEBI" id="CHEBI:57405"/>
        <dbReference type="ChEBI" id="CHEBI:606564"/>
        <dbReference type="EC" id="5.3.99.3"/>
    </reaction>
</comment>
<comment type="pathway">
    <text evidence="1">Lipid metabolism; prostaglandin biosynthesis.</text>
</comment>
<comment type="subunit">
    <text evidence="1">Probably forms a complex composed of chaperones HSP90 and HSP70, co-chaperones STIP1/HOP, CDC37, PPP5C, PTGES3/p23, TSC1 and client protein TSC2. Binds to the progesterone receptor. Interacts with TERT; the interaction, together with HSP90AA1, is required for correct assembly and stabilization of the telomerase holoenzyme complex. Interacts (via PXLE motif) with EGLN1/PHD2, recruiting EGLN1/PHD2 to the HSP90 pathway to facilitate HIF alpha proteins hydroxylation. Interacts with HSP90AA1, FLCN, FNIP1 and FNIP2.</text>
</comment>
<comment type="subcellular location">
    <subcellularLocation>
        <location evidence="2">Cytoplasm</location>
    </subcellularLocation>
</comment>
<comment type="tissue specificity">
    <text evidence="5">Expressed in testis, kidney, bladder and ovary.</text>
</comment>
<comment type="PTM">
    <text evidence="1">Proteolytically cleaved by caspase-7 (CASP7) in response to apoptosis, leading to its inactivation.</text>
</comment>
<comment type="similarity">
    <text evidence="7">Belongs to the p23/wos2 family.</text>
</comment>
<dbReference type="EC" id="5.3.99.3" evidence="1"/>
<dbReference type="EMBL" id="AY281130">
    <property type="protein sequence ID" value="AAP34198.1"/>
    <property type="molecule type" value="mRNA"/>
</dbReference>
<dbReference type="EMBL" id="AB024935">
    <property type="protein sequence ID" value="BAA84684.1"/>
    <property type="molecule type" value="mRNA"/>
</dbReference>
<dbReference type="EMBL" id="AF153479">
    <property type="protein sequence ID" value="AAD39543.1"/>
    <property type="molecule type" value="mRNA"/>
</dbReference>
<dbReference type="EMBL" id="AK008805">
    <property type="protein sequence ID" value="BAB25906.1"/>
    <property type="molecule type" value="mRNA"/>
</dbReference>
<dbReference type="EMBL" id="AK075932">
    <property type="protein sequence ID" value="BAC36062.1"/>
    <property type="molecule type" value="mRNA"/>
</dbReference>
<dbReference type="EMBL" id="AK075987">
    <property type="protein sequence ID" value="BAC36099.1"/>
    <property type="molecule type" value="mRNA"/>
</dbReference>
<dbReference type="EMBL" id="AK077538">
    <property type="protein sequence ID" value="BAC36854.1"/>
    <property type="molecule type" value="mRNA"/>
</dbReference>
<dbReference type="EMBL" id="AK168073">
    <property type="protein sequence ID" value="BAE40047.1"/>
    <property type="molecule type" value="mRNA"/>
</dbReference>
<dbReference type="EMBL" id="AK168210">
    <property type="protein sequence ID" value="BAE40169.1"/>
    <property type="molecule type" value="mRNA"/>
</dbReference>
<dbReference type="EMBL" id="AK168721">
    <property type="protein sequence ID" value="BAE40563.1"/>
    <property type="molecule type" value="mRNA"/>
</dbReference>
<dbReference type="EMBL" id="BC003708">
    <property type="protein sequence ID" value="AAH03708.1"/>
    <property type="molecule type" value="mRNA"/>
</dbReference>
<dbReference type="EMBL" id="BC085264">
    <property type="protein sequence ID" value="AAH85264.1"/>
    <property type="molecule type" value="mRNA"/>
</dbReference>
<dbReference type="CCDS" id="CCDS36087.1"/>
<dbReference type="RefSeq" id="NP_062740.1">
    <property type="nucleotide sequence ID" value="NM_019766.4"/>
</dbReference>
<dbReference type="PDB" id="7Y04">
    <property type="method" value="EM"/>
    <property type="resolution" value="3.50 A"/>
    <property type="chains" value="C/D=1-160"/>
</dbReference>
<dbReference type="PDB" id="8H77">
    <property type="method" value="EM"/>
    <property type="resolution" value="3.20 A"/>
    <property type="chains" value="C/D=1-160"/>
</dbReference>
<dbReference type="PDBsum" id="7Y04"/>
<dbReference type="PDBsum" id="8H77"/>
<dbReference type="EMDB" id="EMD-33537"/>
<dbReference type="EMDB" id="EMD-34519"/>
<dbReference type="SMR" id="Q9R0Q7"/>
<dbReference type="BioGRID" id="207917">
    <property type="interactions" value="26"/>
</dbReference>
<dbReference type="CORUM" id="Q9R0Q7"/>
<dbReference type="FunCoup" id="Q9R0Q7">
    <property type="interactions" value="3541"/>
</dbReference>
<dbReference type="IntAct" id="Q9R0Q7">
    <property type="interactions" value="3"/>
</dbReference>
<dbReference type="MINT" id="Q9R0Q7"/>
<dbReference type="STRING" id="10090.ENSMUSP00000050292"/>
<dbReference type="GlyGen" id="Q9R0Q7">
    <property type="glycosylation" value="1 site, 1 O-linked glycan (1 site)"/>
</dbReference>
<dbReference type="iPTMnet" id="Q9R0Q7"/>
<dbReference type="PhosphoSitePlus" id="Q9R0Q7"/>
<dbReference type="SwissPalm" id="Q9R0Q7"/>
<dbReference type="jPOST" id="Q9R0Q7"/>
<dbReference type="PaxDb" id="10090-ENSMUSP00000050292"/>
<dbReference type="ProteomicsDB" id="254692"/>
<dbReference type="Pumba" id="Q9R0Q7"/>
<dbReference type="Antibodypedia" id="28360">
    <property type="antibodies" value="758 antibodies from 38 providers"/>
</dbReference>
<dbReference type="DNASU" id="56351"/>
<dbReference type="Ensembl" id="ENSMUST00000052798.14">
    <property type="protein sequence ID" value="ENSMUSP00000050292.8"/>
    <property type="gene ID" value="ENSMUSG00000071072.13"/>
</dbReference>
<dbReference type="GeneID" id="56351"/>
<dbReference type="KEGG" id="mmu:56351"/>
<dbReference type="UCSC" id="uc007hld.1">
    <property type="organism name" value="mouse"/>
</dbReference>
<dbReference type="AGR" id="MGI:1929282"/>
<dbReference type="CTD" id="10728"/>
<dbReference type="MGI" id="MGI:1929282">
    <property type="gene designation" value="Ptges3"/>
</dbReference>
<dbReference type="VEuPathDB" id="HostDB:ENSMUSG00000071072"/>
<dbReference type="eggNOG" id="KOG3158">
    <property type="taxonomic scope" value="Eukaryota"/>
</dbReference>
<dbReference type="GeneTree" id="ENSGT00940000154256"/>
<dbReference type="HOGENOM" id="CLU_078883_1_2_1"/>
<dbReference type="InParanoid" id="Q9R0Q7"/>
<dbReference type="OMA" id="IEHKVTD"/>
<dbReference type="OrthoDB" id="1564555at2759"/>
<dbReference type="PhylomeDB" id="Q9R0Q7"/>
<dbReference type="TreeFam" id="TF315077"/>
<dbReference type="Reactome" id="R-MMU-2162123">
    <property type="pathway name" value="Synthesis of Prostaglandins (PG) and Thromboxanes (TX)"/>
</dbReference>
<dbReference type="Reactome" id="R-MMU-3371497">
    <property type="pathway name" value="HSP90 chaperone cycle for steroid hormone receptors (SHR) in the presence of ligand"/>
</dbReference>
<dbReference type="Reactome" id="R-MMU-3371511">
    <property type="pathway name" value="HSF1 activation"/>
</dbReference>
<dbReference type="Reactome" id="R-MMU-3371568">
    <property type="pathway name" value="Attenuation phase"/>
</dbReference>
<dbReference type="Reactome" id="R-MMU-8937144">
    <property type="pathway name" value="Aryl hydrocarbon receptor signalling"/>
</dbReference>
<dbReference type="Reactome" id="R-MMU-8939211">
    <property type="pathway name" value="ESR-mediated signaling"/>
</dbReference>
<dbReference type="Reactome" id="R-MMU-9018519">
    <property type="pathway name" value="Estrogen-dependent gene expression"/>
</dbReference>
<dbReference type="UniPathway" id="UPA00662"/>
<dbReference type="BioGRID-ORCS" id="56351">
    <property type="hits" value="6 hits in 78 CRISPR screens"/>
</dbReference>
<dbReference type="ChiTaRS" id="Ptges3">
    <property type="organism name" value="mouse"/>
</dbReference>
<dbReference type="PRO" id="PR:Q9R0Q7"/>
<dbReference type="Proteomes" id="UP000000589">
    <property type="component" value="Chromosome 10"/>
</dbReference>
<dbReference type="RNAct" id="Q9R0Q7">
    <property type="molecule type" value="protein"/>
</dbReference>
<dbReference type="Bgee" id="ENSMUSG00000071072">
    <property type="expression patterns" value="Expressed in ureter smooth muscle and 259 other cell types or tissues"/>
</dbReference>
<dbReference type="ExpressionAtlas" id="Q9R0Q7">
    <property type="expression patterns" value="baseline and differential"/>
</dbReference>
<dbReference type="GO" id="GO:0005737">
    <property type="term" value="C:cytoplasm"/>
    <property type="evidence" value="ECO:0007669"/>
    <property type="project" value="UniProtKB-SubCell"/>
</dbReference>
<dbReference type="GO" id="GO:0070182">
    <property type="term" value="F:DNA polymerase binding"/>
    <property type="evidence" value="ECO:0000353"/>
    <property type="project" value="BHF-UCL"/>
</dbReference>
<dbReference type="GO" id="GO:0051879">
    <property type="term" value="F:Hsp90 protein binding"/>
    <property type="evidence" value="ECO:0007669"/>
    <property type="project" value="InterPro"/>
</dbReference>
<dbReference type="GO" id="GO:0050220">
    <property type="term" value="F:prostaglandin-E synthase activity"/>
    <property type="evidence" value="ECO:0000250"/>
    <property type="project" value="UniProtKB"/>
</dbReference>
<dbReference type="GO" id="GO:0051082">
    <property type="term" value="F:unfolded protein binding"/>
    <property type="evidence" value="ECO:0000250"/>
    <property type="project" value="UniProtKB"/>
</dbReference>
<dbReference type="GO" id="GO:0048144">
    <property type="term" value="P:fibroblast proliferation"/>
    <property type="evidence" value="ECO:0000315"/>
    <property type="project" value="MGI"/>
</dbReference>
<dbReference type="GO" id="GO:0005978">
    <property type="term" value="P:glycogen biosynthetic process"/>
    <property type="evidence" value="ECO:0000315"/>
    <property type="project" value="MGI"/>
</dbReference>
<dbReference type="GO" id="GO:0060430">
    <property type="term" value="P:lung saccule development"/>
    <property type="evidence" value="ECO:0000315"/>
    <property type="project" value="MGI"/>
</dbReference>
<dbReference type="GO" id="GO:0042921">
    <property type="term" value="P:nuclear receptor-mediated glucocorticoid signaling pathway"/>
    <property type="evidence" value="ECO:0000315"/>
    <property type="project" value="MGI"/>
</dbReference>
<dbReference type="GO" id="GO:0001516">
    <property type="term" value="P:prostaglandin biosynthetic process"/>
    <property type="evidence" value="ECO:0000315"/>
    <property type="project" value="MGI"/>
</dbReference>
<dbReference type="GO" id="GO:0043588">
    <property type="term" value="P:skin development"/>
    <property type="evidence" value="ECO:0000315"/>
    <property type="project" value="MGI"/>
</dbReference>
<dbReference type="GO" id="GO:1905323">
    <property type="term" value="P:telomerase holoenzyme complex assembly"/>
    <property type="evidence" value="ECO:0000314"/>
    <property type="project" value="BHF-UCL"/>
</dbReference>
<dbReference type="GO" id="GO:0007004">
    <property type="term" value="P:telomere maintenance via telomerase"/>
    <property type="evidence" value="ECO:0000314"/>
    <property type="project" value="BHF-UCL"/>
</dbReference>
<dbReference type="CDD" id="cd00237">
    <property type="entry name" value="p23"/>
    <property type="match status" value="1"/>
</dbReference>
<dbReference type="FunFam" id="2.60.40.790:FF:000003">
    <property type="entry name" value="prostaglandin E synthase 3"/>
    <property type="match status" value="1"/>
</dbReference>
<dbReference type="Gene3D" id="2.60.40.790">
    <property type="match status" value="1"/>
</dbReference>
<dbReference type="InterPro" id="IPR007052">
    <property type="entry name" value="CS_dom"/>
</dbReference>
<dbReference type="InterPro" id="IPR008978">
    <property type="entry name" value="HSP20-like_chaperone"/>
</dbReference>
<dbReference type="InterPro" id="IPR045250">
    <property type="entry name" value="p23-like"/>
</dbReference>
<dbReference type="PANTHER" id="PTHR22932:SF3">
    <property type="entry name" value="PROSTAGLANDIN E SYNTHASE 3"/>
    <property type="match status" value="1"/>
</dbReference>
<dbReference type="PANTHER" id="PTHR22932">
    <property type="entry name" value="TELOMERASE-BINDING PROTEIN P23 HSP90 CO-CHAPERONE"/>
    <property type="match status" value="1"/>
</dbReference>
<dbReference type="Pfam" id="PF04969">
    <property type="entry name" value="CS"/>
    <property type="match status" value="1"/>
</dbReference>
<dbReference type="SUPFAM" id="SSF49764">
    <property type="entry name" value="HSP20-like chaperones"/>
    <property type="match status" value="1"/>
</dbReference>
<dbReference type="PROSITE" id="PS51203">
    <property type="entry name" value="CS"/>
    <property type="match status" value="1"/>
</dbReference>
<feature type="chain" id="PRO_0000218953" description="Prostaglandin E synthase 3">
    <location>
        <begin position="1"/>
        <end position="160"/>
    </location>
</feature>
<feature type="domain" description="CS" evidence="3">
    <location>
        <begin position="1"/>
        <end position="90"/>
    </location>
</feature>
<feature type="region of interest" description="Disordered" evidence="4">
    <location>
        <begin position="118"/>
        <end position="160"/>
    </location>
</feature>
<feature type="short sequence motif" description="PXLE motif" evidence="1">
    <location>
        <begin position="157"/>
        <end position="160"/>
    </location>
</feature>
<feature type="compositionally biased region" description="Basic and acidic residues" evidence="4">
    <location>
        <begin position="122"/>
        <end position="132"/>
    </location>
</feature>
<feature type="compositionally biased region" description="Acidic residues" evidence="4">
    <location>
        <begin position="133"/>
        <end position="153"/>
    </location>
</feature>
<feature type="site" description="Cleavage; by caspase-7" evidence="1">
    <location>
        <begin position="142"/>
        <end position="143"/>
    </location>
</feature>
<feature type="modified residue" description="N6-acetyllysine" evidence="13">
    <location>
        <position position="33"/>
    </location>
</feature>
<feature type="modified residue" description="Phosphoserine" evidence="12">
    <location>
        <position position="44"/>
    </location>
</feature>
<feature type="modified residue" description="Phosphoserine" evidence="1">
    <location>
        <position position="85"/>
    </location>
</feature>
<feature type="modified residue" description="Phosphoserine" evidence="12">
    <location>
        <position position="100"/>
    </location>
</feature>
<feature type="modified residue" description="Phosphoserine" evidence="6 8 9 10 11 12">
    <location>
        <position position="113"/>
    </location>
</feature>
<feature type="modified residue" description="Phosphoserine" evidence="12">
    <location>
        <position position="118"/>
    </location>
</feature>
<feature type="modified residue" description="Phosphoserine" evidence="12">
    <location>
        <position position="148"/>
    </location>
</feature>
<feature type="modified residue" description="Phosphoserine" evidence="12">
    <location>
        <position position="151"/>
    </location>
</feature>
<feature type="cross-link" description="Glycyl lysine isopeptide (Lys-Gly) (interchain with G-Cter in SUMO2)" evidence="1">
    <location>
        <position position="35"/>
    </location>
</feature>
<feature type="cross-link" description="Glycyl lysine isopeptide (Lys-Gly) (interchain with G-Cter in SUMO2)" evidence="1">
    <location>
        <position position="65"/>
    </location>
</feature>
<feature type="sequence conflict" description="In Ref. 3; AAD39543." evidence="7" ref="3">
    <original>PR</original>
    <variation>LG</variation>
    <location>
        <begin position="87"/>
        <end position="88"/>
    </location>
</feature>
<feature type="sequence conflict" description="In Ref. 1; AAP34198 and 4; BAB25906." evidence="7" ref="1 4">
    <original>D</original>
    <variation>N</variation>
    <location>
        <position position="108"/>
    </location>
</feature>
<feature type="strand" evidence="14">
    <location>
        <begin position="6"/>
        <end position="10"/>
    </location>
</feature>
<feature type="strand" evidence="14">
    <location>
        <begin position="12"/>
        <end position="19"/>
    </location>
</feature>
<feature type="strand" evidence="14">
    <location>
        <begin position="25"/>
        <end position="31"/>
    </location>
</feature>
<feature type="strand" evidence="14">
    <location>
        <begin position="33"/>
        <end position="42"/>
    </location>
</feature>
<feature type="turn" evidence="14">
    <location>
        <begin position="43"/>
        <end position="46"/>
    </location>
</feature>
<feature type="strand" evidence="14">
    <location>
        <begin position="47"/>
        <end position="57"/>
    </location>
</feature>
<feature type="turn" evidence="14">
    <location>
        <begin position="61"/>
        <end position="63"/>
    </location>
</feature>
<feature type="strand" evidence="14">
    <location>
        <begin position="65"/>
        <end position="68"/>
    </location>
</feature>
<feature type="strand" evidence="14">
    <location>
        <begin position="73"/>
        <end position="81"/>
    </location>
</feature>
<feature type="strand" evidence="14">
    <location>
        <begin position="89"/>
        <end position="92"/>
    </location>
</feature>
<feature type="strand" evidence="14">
    <location>
        <begin position="99"/>
        <end position="101"/>
    </location>
</feature>
<feature type="turn" evidence="14">
    <location>
        <begin position="103"/>
        <end position="105"/>
    </location>
</feature>
<evidence type="ECO:0000250" key="1">
    <source>
        <dbReference type="UniProtKB" id="Q15185"/>
    </source>
</evidence>
<evidence type="ECO:0000250" key="2">
    <source>
        <dbReference type="UniProtKB" id="Q3ZBF7"/>
    </source>
</evidence>
<evidence type="ECO:0000255" key="3">
    <source>
        <dbReference type="PROSITE-ProRule" id="PRU00547"/>
    </source>
</evidence>
<evidence type="ECO:0000256" key="4">
    <source>
        <dbReference type="SAM" id="MobiDB-lite"/>
    </source>
</evidence>
<evidence type="ECO:0000269" key="5">
    <source>
    </source>
</evidence>
<evidence type="ECO:0000269" key="6">
    <source>
    </source>
</evidence>
<evidence type="ECO:0000305" key="7"/>
<evidence type="ECO:0007744" key="8">
    <source>
    </source>
</evidence>
<evidence type="ECO:0007744" key="9">
    <source>
    </source>
</evidence>
<evidence type="ECO:0007744" key="10">
    <source>
    </source>
</evidence>
<evidence type="ECO:0007744" key="11">
    <source>
    </source>
</evidence>
<evidence type="ECO:0007744" key="12">
    <source>
    </source>
</evidence>
<evidence type="ECO:0007744" key="13">
    <source>
    </source>
</evidence>
<evidence type="ECO:0007829" key="14">
    <source>
        <dbReference type="PDB" id="8H77"/>
    </source>
</evidence>
<protein>
    <recommendedName>
        <fullName>Prostaglandin E synthase 3</fullName>
        <ecNumber evidence="1">5.3.99.3</ecNumber>
    </recommendedName>
    <alternativeName>
        <fullName>Cytosolic prostaglandin E2 synthase</fullName>
        <shortName>cPGES</shortName>
    </alternativeName>
    <alternativeName>
        <fullName>Hsp90 co-chaperone</fullName>
    </alternativeName>
    <alternativeName>
        <fullName>Progesterone receptor complex p23</fullName>
    </alternativeName>
    <alternativeName>
        <fullName>Sid 3177</fullName>
    </alternativeName>
    <alternativeName>
        <fullName>Telomerase-binding protein p23</fullName>
    </alternativeName>
</protein>
<organism>
    <name type="scientific">Mus musculus</name>
    <name type="common">Mouse</name>
    <dbReference type="NCBI Taxonomy" id="10090"/>
    <lineage>
        <taxon>Eukaryota</taxon>
        <taxon>Metazoa</taxon>
        <taxon>Chordata</taxon>
        <taxon>Craniata</taxon>
        <taxon>Vertebrata</taxon>
        <taxon>Euteleostomi</taxon>
        <taxon>Mammalia</taxon>
        <taxon>Eutheria</taxon>
        <taxon>Euarchontoglires</taxon>
        <taxon>Glires</taxon>
        <taxon>Rodentia</taxon>
        <taxon>Myomorpha</taxon>
        <taxon>Muroidea</taxon>
        <taxon>Muridae</taxon>
        <taxon>Murinae</taxon>
        <taxon>Mus</taxon>
        <taxon>Mus</taxon>
    </lineage>
</organism>
<accession>Q9R0Q7</accession>
<accession>Q542V4</accession>
<accession>Q9D7V0</accession>
<accession>Q9WV83</accession>
<reference key="1">
    <citation type="journal article" date="2003" name="Biochim. Biophys. Acta">
        <title>Genomic structure and genitourinary expression of mouse cytosolic prostaglandin E(2) synthase gene.</title>
        <authorList>
            <person name="Zhang Y."/>
            <person name="Schneider A."/>
            <person name="Rao R."/>
            <person name="Lu W.J."/>
            <person name="Fan X."/>
            <person name="Davis L."/>
            <person name="Breyer R.M."/>
            <person name="Breyer M.D."/>
            <person name="Guan Y."/>
        </authorList>
    </citation>
    <scope>NUCLEOTIDE SEQUENCE [MRNA]</scope>
    <scope>TISSUE SPECIFICITY</scope>
    <source>
        <strain>C57BL/6J</strain>
        <tissue>Kidney</tissue>
    </source>
</reference>
<reference key="2">
    <citation type="submission" date="1999-03" db="EMBL/GenBank/DDBJ databases">
        <title>Mouse p23 uniactive progesterone receptor complexes.</title>
        <authorList>
            <person name="Seki N."/>
            <person name="Hattori A."/>
            <person name="Hayashi A."/>
            <person name="Kozuma S."/>
            <person name="Muramatsu M."/>
            <person name="Saito T."/>
        </authorList>
    </citation>
    <scope>NUCLEOTIDE SEQUENCE [MRNA]</scope>
</reference>
<reference key="3">
    <citation type="submission" date="1999-05" db="EMBL/GenBank/DDBJ databases">
        <authorList>
            <person name="Cheong C."/>
            <person name="Lee H.-W."/>
        </authorList>
    </citation>
    <scope>NUCLEOTIDE SEQUENCE [MRNA]</scope>
    <source>
        <tissue>Brain</tissue>
    </source>
</reference>
<reference key="4">
    <citation type="journal article" date="2005" name="Science">
        <title>The transcriptional landscape of the mammalian genome.</title>
        <authorList>
            <person name="Carninci P."/>
            <person name="Kasukawa T."/>
            <person name="Katayama S."/>
            <person name="Gough J."/>
            <person name="Frith M.C."/>
            <person name="Maeda N."/>
            <person name="Oyama R."/>
            <person name="Ravasi T."/>
            <person name="Lenhard B."/>
            <person name="Wells C."/>
            <person name="Kodzius R."/>
            <person name="Shimokawa K."/>
            <person name="Bajic V.B."/>
            <person name="Brenner S.E."/>
            <person name="Batalov S."/>
            <person name="Forrest A.R."/>
            <person name="Zavolan M."/>
            <person name="Davis M.J."/>
            <person name="Wilming L.G."/>
            <person name="Aidinis V."/>
            <person name="Allen J.E."/>
            <person name="Ambesi-Impiombato A."/>
            <person name="Apweiler R."/>
            <person name="Aturaliya R.N."/>
            <person name="Bailey T.L."/>
            <person name="Bansal M."/>
            <person name="Baxter L."/>
            <person name="Beisel K.W."/>
            <person name="Bersano T."/>
            <person name="Bono H."/>
            <person name="Chalk A.M."/>
            <person name="Chiu K.P."/>
            <person name="Choudhary V."/>
            <person name="Christoffels A."/>
            <person name="Clutterbuck D.R."/>
            <person name="Crowe M.L."/>
            <person name="Dalla E."/>
            <person name="Dalrymple B.P."/>
            <person name="de Bono B."/>
            <person name="Della Gatta G."/>
            <person name="di Bernardo D."/>
            <person name="Down T."/>
            <person name="Engstrom P."/>
            <person name="Fagiolini M."/>
            <person name="Faulkner G."/>
            <person name="Fletcher C.F."/>
            <person name="Fukushima T."/>
            <person name="Furuno M."/>
            <person name="Futaki S."/>
            <person name="Gariboldi M."/>
            <person name="Georgii-Hemming P."/>
            <person name="Gingeras T.R."/>
            <person name="Gojobori T."/>
            <person name="Green R.E."/>
            <person name="Gustincich S."/>
            <person name="Harbers M."/>
            <person name="Hayashi Y."/>
            <person name="Hensch T.K."/>
            <person name="Hirokawa N."/>
            <person name="Hill D."/>
            <person name="Huminiecki L."/>
            <person name="Iacono M."/>
            <person name="Ikeo K."/>
            <person name="Iwama A."/>
            <person name="Ishikawa T."/>
            <person name="Jakt M."/>
            <person name="Kanapin A."/>
            <person name="Katoh M."/>
            <person name="Kawasawa Y."/>
            <person name="Kelso J."/>
            <person name="Kitamura H."/>
            <person name="Kitano H."/>
            <person name="Kollias G."/>
            <person name="Krishnan S.P."/>
            <person name="Kruger A."/>
            <person name="Kummerfeld S.K."/>
            <person name="Kurochkin I.V."/>
            <person name="Lareau L.F."/>
            <person name="Lazarevic D."/>
            <person name="Lipovich L."/>
            <person name="Liu J."/>
            <person name="Liuni S."/>
            <person name="McWilliam S."/>
            <person name="Madan Babu M."/>
            <person name="Madera M."/>
            <person name="Marchionni L."/>
            <person name="Matsuda H."/>
            <person name="Matsuzawa S."/>
            <person name="Miki H."/>
            <person name="Mignone F."/>
            <person name="Miyake S."/>
            <person name="Morris K."/>
            <person name="Mottagui-Tabar S."/>
            <person name="Mulder N."/>
            <person name="Nakano N."/>
            <person name="Nakauchi H."/>
            <person name="Ng P."/>
            <person name="Nilsson R."/>
            <person name="Nishiguchi S."/>
            <person name="Nishikawa S."/>
            <person name="Nori F."/>
            <person name="Ohara O."/>
            <person name="Okazaki Y."/>
            <person name="Orlando V."/>
            <person name="Pang K.C."/>
            <person name="Pavan W.J."/>
            <person name="Pavesi G."/>
            <person name="Pesole G."/>
            <person name="Petrovsky N."/>
            <person name="Piazza S."/>
            <person name="Reed J."/>
            <person name="Reid J.F."/>
            <person name="Ring B.Z."/>
            <person name="Ringwald M."/>
            <person name="Rost B."/>
            <person name="Ruan Y."/>
            <person name="Salzberg S.L."/>
            <person name="Sandelin A."/>
            <person name="Schneider C."/>
            <person name="Schoenbach C."/>
            <person name="Sekiguchi K."/>
            <person name="Semple C.A."/>
            <person name="Seno S."/>
            <person name="Sessa L."/>
            <person name="Sheng Y."/>
            <person name="Shibata Y."/>
            <person name="Shimada H."/>
            <person name="Shimada K."/>
            <person name="Silva D."/>
            <person name="Sinclair B."/>
            <person name="Sperling S."/>
            <person name="Stupka E."/>
            <person name="Sugiura K."/>
            <person name="Sultana R."/>
            <person name="Takenaka Y."/>
            <person name="Taki K."/>
            <person name="Tammoja K."/>
            <person name="Tan S.L."/>
            <person name="Tang S."/>
            <person name="Taylor M.S."/>
            <person name="Tegner J."/>
            <person name="Teichmann S.A."/>
            <person name="Ueda H.R."/>
            <person name="van Nimwegen E."/>
            <person name="Verardo R."/>
            <person name="Wei C.L."/>
            <person name="Yagi K."/>
            <person name="Yamanishi H."/>
            <person name="Zabarovsky E."/>
            <person name="Zhu S."/>
            <person name="Zimmer A."/>
            <person name="Hide W."/>
            <person name="Bult C."/>
            <person name="Grimmond S.M."/>
            <person name="Teasdale R.D."/>
            <person name="Liu E.T."/>
            <person name="Brusic V."/>
            <person name="Quackenbush J."/>
            <person name="Wahlestedt C."/>
            <person name="Mattick J.S."/>
            <person name="Hume D.A."/>
            <person name="Kai C."/>
            <person name="Sasaki D."/>
            <person name="Tomaru Y."/>
            <person name="Fukuda S."/>
            <person name="Kanamori-Katayama M."/>
            <person name="Suzuki M."/>
            <person name="Aoki J."/>
            <person name="Arakawa T."/>
            <person name="Iida J."/>
            <person name="Imamura K."/>
            <person name="Itoh M."/>
            <person name="Kato T."/>
            <person name="Kawaji H."/>
            <person name="Kawagashira N."/>
            <person name="Kawashima T."/>
            <person name="Kojima M."/>
            <person name="Kondo S."/>
            <person name="Konno H."/>
            <person name="Nakano K."/>
            <person name="Ninomiya N."/>
            <person name="Nishio T."/>
            <person name="Okada M."/>
            <person name="Plessy C."/>
            <person name="Shibata K."/>
            <person name="Shiraki T."/>
            <person name="Suzuki S."/>
            <person name="Tagami M."/>
            <person name="Waki K."/>
            <person name="Watahiki A."/>
            <person name="Okamura-Oho Y."/>
            <person name="Suzuki H."/>
            <person name="Kawai J."/>
            <person name="Hayashizaki Y."/>
        </authorList>
    </citation>
    <scope>NUCLEOTIDE SEQUENCE [LARGE SCALE MRNA]</scope>
    <source>
        <strain>C57BL/6J</strain>
        <strain>DBA/2J</strain>
        <tissue>Liver</tissue>
        <tissue>Stomach</tissue>
    </source>
</reference>
<reference key="5">
    <citation type="journal article" date="2004" name="Genome Res.">
        <title>The status, quality, and expansion of the NIH full-length cDNA project: the Mammalian Gene Collection (MGC).</title>
        <authorList>
            <consortium name="The MGC Project Team"/>
        </authorList>
    </citation>
    <scope>NUCLEOTIDE SEQUENCE [LARGE SCALE MRNA]</scope>
    <source>
        <strain>C57BL/6J</strain>
        <tissue>Mammary gland</tissue>
        <tissue>Olfactory epithelium</tissue>
    </source>
</reference>
<reference key="6">
    <citation type="submission" date="2007-07" db="UniProtKB">
        <authorList>
            <person name="Lubec G."/>
            <person name="Yang J.W."/>
            <person name="Zigmond M."/>
        </authorList>
    </citation>
    <scope>PROTEIN SEQUENCE OF 36-48</scope>
    <source>
        <tissue>Brain</tissue>
    </source>
</reference>
<reference key="7">
    <citation type="journal article" date="2004" name="Mol. Cell. Proteomics">
        <title>Phosphoproteomic analysis of the developing mouse brain.</title>
        <authorList>
            <person name="Ballif B.A."/>
            <person name="Villen J."/>
            <person name="Beausoleil S.A."/>
            <person name="Schwartz D."/>
            <person name="Gygi S.P."/>
        </authorList>
    </citation>
    <scope>PHOSPHORYLATION [LARGE SCALE ANALYSIS] AT SER-113</scope>
    <scope>IDENTIFICATION BY MASS SPECTROMETRY [LARGE SCALE ANALYSIS]</scope>
    <source>
        <tissue>Embryonic brain</tissue>
    </source>
</reference>
<reference key="8">
    <citation type="journal article" date="2004" name="Rapid Commun. Mass Spectrom.">
        <title>Phosphoproteome analysis of mouse liver using immobilized metal affinity purification and linear ion trap mass spectrometry.</title>
        <authorList>
            <person name="Jin W.-H."/>
            <person name="Dai J."/>
            <person name="Zhou H."/>
            <person name="Xia Q.-C."/>
            <person name="Zou H.-F."/>
            <person name="Zeng R."/>
        </authorList>
    </citation>
    <scope>PHOSPHORYLATION AT SER-113</scope>
</reference>
<reference key="9">
    <citation type="journal article" date="2007" name="Proc. Natl. Acad. Sci. U.S.A.">
        <title>Large-scale phosphorylation analysis of mouse liver.</title>
        <authorList>
            <person name="Villen J."/>
            <person name="Beausoleil S.A."/>
            <person name="Gerber S.A."/>
            <person name="Gygi S.P."/>
        </authorList>
    </citation>
    <scope>PHOSPHORYLATION [LARGE SCALE ANALYSIS] AT SER-113</scope>
    <scope>IDENTIFICATION BY MASS SPECTROMETRY [LARGE SCALE ANALYSIS]</scope>
    <source>
        <tissue>Liver</tissue>
    </source>
</reference>
<reference key="10">
    <citation type="journal article" date="2008" name="J. Proteome Res.">
        <title>Specific phosphopeptide enrichment with immobilized titanium ion affinity chromatography adsorbent for phosphoproteome analysis.</title>
        <authorList>
            <person name="Zhou H."/>
            <person name="Ye M."/>
            <person name="Dong J."/>
            <person name="Han G."/>
            <person name="Jiang X."/>
            <person name="Wu R."/>
            <person name="Zou H."/>
        </authorList>
    </citation>
    <scope>PHOSPHORYLATION [LARGE SCALE ANALYSIS] AT SER-113</scope>
    <scope>IDENTIFICATION BY MASS SPECTROMETRY [LARGE SCALE ANALYSIS]</scope>
    <source>
        <tissue>Liver</tissue>
    </source>
</reference>
<reference key="11">
    <citation type="journal article" date="2009" name="Immunity">
        <title>The phagosomal proteome in interferon-gamma-activated macrophages.</title>
        <authorList>
            <person name="Trost M."/>
            <person name="English L."/>
            <person name="Lemieux S."/>
            <person name="Courcelles M."/>
            <person name="Desjardins M."/>
            <person name="Thibault P."/>
        </authorList>
    </citation>
    <scope>PHOSPHORYLATION [LARGE SCALE ANALYSIS] AT SER-113</scope>
    <scope>IDENTIFICATION BY MASS SPECTROMETRY [LARGE SCALE ANALYSIS]</scope>
</reference>
<reference key="12">
    <citation type="journal article" date="2010" name="Cell">
        <title>A tissue-specific atlas of mouse protein phosphorylation and expression.</title>
        <authorList>
            <person name="Huttlin E.L."/>
            <person name="Jedrychowski M.P."/>
            <person name="Elias J.E."/>
            <person name="Goswami T."/>
            <person name="Rad R."/>
            <person name="Beausoleil S.A."/>
            <person name="Villen J."/>
            <person name="Haas W."/>
            <person name="Sowa M.E."/>
            <person name="Gygi S.P."/>
        </authorList>
    </citation>
    <scope>PHOSPHORYLATION [LARGE SCALE ANALYSIS] AT SER-44; SER-100; SER-113; SER-118; SER-148 AND SER-151</scope>
    <scope>IDENTIFICATION BY MASS SPECTROMETRY [LARGE SCALE ANALYSIS]</scope>
    <source>
        <tissue>Brain</tissue>
        <tissue>Brown adipose tissue</tissue>
        <tissue>Heart</tissue>
        <tissue>Kidney</tissue>
        <tissue>Liver</tissue>
        <tissue>Lung</tissue>
        <tissue>Pancreas</tissue>
        <tissue>Spleen</tissue>
        <tissue>Testis</tissue>
    </source>
</reference>
<reference key="13">
    <citation type="journal article" date="2013" name="Mol. Cell">
        <title>SIRT5-mediated lysine desuccinylation impacts diverse metabolic pathways.</title>
        <authorList>
            <person name="Park J."/>
            <person name="Chen Y."/>
            <person name="Tishkoff D.X."/>
            <person name="Peng C."/>
            <person name="Tan M."/>
            <person name="Dai L."/>
            <person name="Xie Z."/>
            <person name="Zhang Y."/>
            <person name="Zwaans B.M."/>
            <person name="Skinner M.E."/>
            <person name="Lombard D.B."/>
            <person name="Zhao Y."/>
        </authorList>
    </citation>
    <scope>ACETYLATION [LARGE SCALE ANALYSIS] AT LYS-33</scope>
    <scope>IDENTIFICATION BY MASS SPECTROMETRY [LARGE SCALE ANALYSIS]</scope>
    <source>
        <tissue>Embryonic fibroblast</tissue>
    </source>
</reference>
<proteinExistence type="evidence at protein level"/>
<keyword id="KW-0002">3D-structure</keyword>
<keyword id="KW-0007">Acetylation</keyword>
<keyword id="KW-0963">Cytoplasm</keyword>
<keyword id="KW-0903">Direct protein sequencing</keyword>
<keyword id="KW-0275">Fatty acid biosynthesis</keyword>
<keyword id="KW-0276">Fatty acid metabolism</keyword>
<keyword id="KW-0413">Isomerase</keyword>
<keyword id="KW-1017">Isopeptide bond</keyword>
<keyword id="KW-0444">Lipid biosynthesis</keyword>
<keyword id="KW-0443">Lipid metabolism</keyword>
<keyword id="KW-0597">Phosphoprotein</keyword>
<keyword id="KW-0643">Prostaglandin biosynthesis</keyword>
<keyword id="KW-0644">Prostaglandin metabolism</keyword>
<keyword id="KW-1185">Reference proteome</keyword>
<keyword id="KW-0832">Ubl conjugation</keyword>
<gene>
    <name type="primary">Ptges3</name>
    <name type="synonym">Sid3177</name>
    <name type="synonym">Tebp</name>
</gene>